<proteinExistence type="evidence at transcript level"/>
<accession>B7ZRT8</accession>
<name>IRX4B_XENLA</name>
<sequence>MSYPQFGYPYSSTPQFLMTTNSLSTCCESNGRSLSDSAAAASAQTPVYCPVYESRLLATARHELNSAAALGVYGSPYTSTQGYGNYVTYGADAPSFYSLNAFESKDGTGSAHAGIPQTAAYYPYEHTLSQYQYDRYGTMDGSTRRKNATRETTSTLKAWLQEHRKNPYPTKGEKIMLAIITKMTLTQVSTWFANARRRLKKENKMTWPPRNKCSDEKRPYDEEEEEEEDSQKATIKNEKKTVDEEIHREEKALDLSDLEDFDTIESESSECELKQPFHHQPQDGHQLRQRDCVNDHCKEVILKMPITSTATQELDRTKICHKTGLDQCEQDLLRGRQRGGGESKSCFQQQQILDSKPRIWSLAHTATSLNQTEYPSCMLKHQGLSSPSSSSSSSAVSTPVCVIDRRQDSPVTSLRNWVDGVFHDPLFRHSTLNQALTNTTVSWATTKGTLIDSGSLGRSVGNSTNVIKGQLPNLPHDTNKEFIAFQTSGSKMFCS</sequence>
<keyword id="KW-0217">Developmental protein</keyword>
<keyword id="KW-0221">Differentiation</keyword>
<keyword id="KW-0238">DNA-binding</keyword>
<keyword id="KW-0371">Homeobox</keyword>
<keyword id="KW-0524">Neurogenesis</keyword>
<keyword id="KW-0539">Nucleus</keyword>
<keyword id="KW-1185">Reference proteome</keyword>
<keyword id="KW-0804">Transcription</keyword>
<keyword id="KW-0805">Transcription regulation</keyword>
<gene>
    <name type="primary">irx4-b</name>
</gene>
<reference evidence="6" key="1">
    <citation type="submission" date="2008-11" db="EMBL/GenBank/DDBJ databases">
        <authorList>
            <consortium name="NIH - Xenopus Gene Collection (XGC) project"/>
        </authorList>
    </citation>
    <scope>NUCLEOTIDE SEQUENCE [LARGE SCALE MRNA]</scope>
</reference>
<dbReference type="EMBL" id="BC170284">
    <property type="protein sequence ID" value="AAI70284.1"/>
    <property type="molecule type" value="mRNA"/>
</dbReference>
<dbReference type="RefSeq" id="NP_001154863.1">
    <property type="nucleotide sequence ID" value="NM_001161391.1"/>
</dbReference>
<dbReference type="RefSeq" id="XP_018124032.1">
    <property type="nucleotide sequence ID" value="XM_018268543.1"/>
</dbReference>
<dbReference type="RefSeq" id="XP_018124033.1">
    <property type="nucleotide sequence ID" value="XM_018268544.1"/>
</dbReference>
<dbReference type="SMR" id="B7ZRT8"/>
<dbReference type="GeneID" id="100301956"/>
<dbReference type="KEGG" id="xla:100301956"/>
<dbReference type="AGR" id="Xenbase:XB-GENE-6448215"/>
<dbReference type="CTD" id="100301956"/>
<dbReference type="Xenbase" id="XB-GENE-6448215">
    <property type="gene designation" value="irx4.S"/>
</dbReference>
<dbReference type="OrthoDB" id="5399138at2759"/>
<dbReference type="Proteomes" id="UP000186698">
    <property type="component" value="Chromosome 6S"/>
</dbReference>
<dbReference type="Bgee" id="100301956">
    <property type="expression patterns" value="Expressed in heart and 5 other cell types or tissues"/>
</dbReference>
<dbReference type="GO" id="GO:0005634">
    <property type="term" value="C:nucleus"/>
    <property type="evidence" value="ECO:0000250"/>
    <property type="project" value="UniProtKB"/>
</dbReference>
<dbReference type="GO" id="GO:0000981">
    <property type="term" value="F:DNA-binding transcription factor activity, RNA polymerase II-specific"/>
    <property type="evidence" value="ECO:0000318"/>
    <property type="project" value="GO_Central"/>
</dbReference>
<dbReference type="GO" id="GO:0000978">
    <property type="term" value="F:RNA polymerase II cis-regulatory region sequence-specific DNA binding"/>
    <property type="evidence" value="ECO:0000318"/>
    <property type="project" value="GO_Central"/>
</dbReference>
<dbReference type="GO" id="GO:0007420">
    <property type="term" value="P:brain development"/>
    <property type="evidence" value="ECO:0007669"/>
    <property type="project" value="UniProtKB-ARBA"/>
</dbReference>
<dbReference type="GO" id="GO:0048468">
    <property type="term" value="P:cell development"/>
    <property type="evidence" value="ECO:0000318"/>
    <property type="project" value="GO_Central"/>
</dbReference>
<dbReference type="GO" id="GO:0009953">
    <property type="term" value="P:dorsal/ventral pattern formation"/>
    <property type="evidence" value="ECO:0007669"/>
    <property type="project" value="UniProtKB-ARBA"/>
</dbReference>
<dbReference type="GO" id="GO:0007507">
    <property type="term" value="P:heart development"/>
    <property type="evidence" value="ECO:0000250"/>
    <property type="project" value="UniProtKB"/>
</dbReference>
<dbReference type="GO" id="GO:0030182">
    <property type="term" value="P:neuron differentiation"/>
    <property type="evidence" value="ECO:0000318"/>
    <property type="project" value="GO_Central"/>
</dbReference>
<dbReference type="GO" id="GO:0009954">
    <property type="term" value="P:proximal/distal pattern formation"/>
    <property type="evidence" value="ECO:0007669"/>
    <property type="project" value="UniProtKB-ARBA"/>
</dbReference>
<dbReference type="GO" id="GO:0006357">
    <property type="term" value="P:regulation of transcription by RNA polymerase II"/>
    <property type="evidence" value="ECO:0000318"/>
    <property type="project" value="GO_Central"/>
</dbReference>
<dbReference type="CDD" id="cd00086">
    <property type="entry name" value="homeodomain"/>
    <property type="match status" value="1"/>
</dbReference>
<dbReference type="FunFam" id="1.10.10.60:FF:000003">
    <property type="entry name" value="Iroquois-class homeobox protein IRX"/>
    <property type="match status" value="1"/>
</dbReference>
<dbReference type="Gene3D" id="1.10.10.60">
    <property type="entry name" value="Homeodomain-like"/>
    <property type="match status" value="1"/>
</dbReference>
<dbReference type="InterPro" id="IPR001356">
    <property type="entry name" value="HD"/>
</dbReference>
<dbReference type="InterPro" id="IPR017970">
    <property type="entry name" value="Homeobox_CS"/>
</dbReference>
<dbReference type="InterPro" id="IPR009057">
    <property type="entry name" value="Homeodomain-like_sf"/>
</dbReference>
<dbReference type="InterPro" id="IPR003893">
    <property type="entry name" value="Iroquois_homeo"/>
</dbReference>
<dbReference type="InterPro" id="IPR008422">
    <property type="entry name" value="KN_HD"/>
</dbReference>
<dbReference type="PANTHER" id="PTHR11211">
    <property type="entry name" value="IROQUOIS-CLASS HOMEODOMAIN PROTEIN IRX"/>
    <property type="match status" value="1"/>
</dbReference>
<dbReference type="PANTHER" id="PTHR11211:SF16">
    <property type="entry name" value="IROQUOIS-CLASS HOMEODOMAIN PROTEIN IRX-4"/>
    <property type="match status" value="1"/>
</dbReference>
<dbReference type="Pfam" id="PF05920">
    <property type="entry name" value="Homeobox_KN"/>
    <property type="match status" value="1"/>
</dbReference>
<dbReference type="SMART" id="SM00389">
    <property type="entry name" value="HOX"/>
    <property type="match status" value="1"/>
</dbReference>
<dbReference type="SMART" id="SM00548">
    <property type="entry name" value="IRO"/>
    <property type="match status" value="1"/>
</dbReference>
<dbReference type="SUPFAM" id="SSF46689">
    <property type="entry name" value="Homeodomain-like"/>
    <property type="match status" value="1"/>
</dbReference>
<dbReference type="PROSITE" id="PS00027">
    <property type="entry name" value="HOMEOBOX_1"/>
    <property type="match status" value="1"/>
</dbReference>
<dbReference type="PROSITE" id="PS50071">
    <property type="entry name" value="HOMEOBOX_2"/>
    <property type="match status" value="1"/>
</dbReference>
<feature type="chain" id="PRO_0000388719" description="Iroquois-class homeodomain protein irx-4-B">
    <location>
        <begin position="1"/>
        <end position="495"/>
    </location>
</feature>
<feature type="DNA-binding region" description="Homeobox; TALE-type" evidence="3">
    <location>
        <begin position="141"/>
        <end position="203"/>
    </location>
</feature>
<feature type="region of interest" description="Disordered" evidence="4">
    <location>
        <begin position="203"/>
        <end position="245"/>
    </location>
</feature>
<feature type="compositionally biased region" description="Basic and acidic residues" evidence="4">
    <location>
        <begin position="235"/>
        <end position="245"/>
    </location>
</feature>
<organism>
    <name type="scientific">Xenopus laevis</name>
    <name type="common">African clawed frog</name>
    <dbReference type="NCBI Taxonomy" id="8355"/>
    <lineage>
        <taxon>Eukaryota</taxon>
        <taxon>Metazoa</taxon>
        <taxon>Chordata</taxon>
        <taxon>Craniata</taxon>
        <taxon>Vertebrata</taxon>
        <taxon>Euteleostomi</taxon>
        <taxon>Amphibia</taxon>
        <taxon>Batrachia</taxon>
        <taxon>Anura</taxon>
        <taxon>Pipoidea</taxon>
        <taxon>Pipidae</taxon>
        <taxon>Xenopodinae</taxon>
        <taxon>Xenopus</taxon>
        <taxon>Xenopus</taxon>
    </lineage>
</organism>
<protein>
    <recommendedName>
        <fullName>Iroquois-class homeodomain protein irx-4-B</fullName>
    </recommendedName>
    <alternativeName>
        <fullName>Iroquois homeobox protein 4-B</fullName>
    </alternativeName>
</protein>
<comment type="function">
    <text evidence="1">Acts partially redundantly with other irx members in neural patterning. Required for formation of the posterior forebrain, midbrain, hindbrain, and to a lesser extent, spinal cord. Patterns the neuroectoderm in both the anterior/posterior and dorsal/ventral axes. Does not appear to play a role in pronephros kidney development (By similarity).</text>
</comment>
<comment type="subcellular location">
    <subcellularLocation>
        <location evidence="2 5">Nucleus</location>
    </subcellularLocation>
</comment>
<comment type="similarity">
    <text evidence="2">Belongs to the TALE/IRO homeobox family.</text>
</comment>
<evidence type="ECO:0000250" key="1">
    <source>
        <dbReference type="UniProtKB" id="Q90XW6"/>
    </source>
</evidence>
<evidence type="ECO:0000255" key="2"/>
<evidence type="ECO:0000255" key="3">
    <source>
        <dbReference type="PROSITE-ProRule" id="PRU00108"/>
    </source>
</evidence>
<evidence type="ECO:0000256" key="4">
    <source>
        <dbReference type="SAM" id="MobiDB-lite"/>
    </source>
</evidence>
<evidence type="ECO:0000305" key="5"/>
<evidence type="ECO:0000312" key="6">
    <source>
        <dbReference type="EMBL" id="AAI70284.1"/>
    </source>
</evidence>